<reference key="1">
    <citation type="journal article" date="1996" name="Science">
        <title>Complete genome sequence of the methanogenic archaeon, Methanococcus jannaschii.</title>
        <authorList>
            <person name="Bult C.J."/>
            <person name="White O."/>
            <person name="Olsen G.J."/>
            <person name="Zhou L."/>
            <person name="Fleischmann R.D."/>
            <person name="Sutton G.G."/>
            <person name="Blake J.A."/>
            <person name="FitzGerald L.M."/>
            <person name="Clayton R.A."/>
            <person name="Gocayne J.D."/>
            <person name="Kerlavage A.R."/>
            <person name="Dougherty B.A."/>
            <person name="Tomb J.-F."/>
            <person name="Adams M.D."/>
            <person name="Reich C.I."/>
            <person name="Overbeek R."/>
            <person name="Kirkness E.F."/>
            <person name="Weinstock K.G."/>
            <person name="Merrick J.M."/>
            <person name="Glodek A."/>
            <person name="Scott J.L."/>
            <person name="Geoghagen N.S.M."/>
            <person name="Weidman J.F."/>
            <person name="Fuhrmann J.L."/>
            <person name="Nguyen D."/>
            <person name="Utterback T.R."/>
            <person name="Kelley J.M."/>
            <person name="Peterson J.D."/>
            <person name="Sadow P.W."/>
            <person name="Hanna M.C."/>
            <person name="Cotton M.D."/>
            <person name="Roberts K.M."/>
            <person name="Hurst M.A."/>
            <person name="Kaine B.P."/>
            <person name="Borodovsky M."/>
            <person name="Klenk H.-P."/>
            <person name="Fraser C.M."/>
            <person name="Smith H.O."/>
            <person name="Woese C.R."/>
            <person name="Venter J.C."/>
        </authorList>
    </citation>
    <scope>NUCLEOTIDE SEQUENCE [LARGE SCALE GENOMIC DNA]</scope>
    <source>
        <strain>ATCC 43067 / DSM 2661 / JAL-1 / JCM 10045 / NBRC 100440</strain>
    </source>
</reference>
<protein>
    <recommendedName>
        <fullName>Uncharacterized protein MJ0957</fullName>
    </recommendedName>
</protein>
<organism>
    <name type="scientific">Methanocaldococcus jannaschii (strain ATCC 43067 / DSM 2661 / JAL-1 / JCM 10045 / NBRC 100440)</name>
    <name type="common">Methanococcus jannaschii</name>
    <dbReference type="NCBI Taxonomy" id="243232"/>
    <lineage>
        <taxon>Archaea</taxon>
        <taxon>Methanobacteriati</taxon>
        <taxon>Methanobacteriota</taxon>
        <taxon>Methanomada group</taxon>
        <taxon>Methanococci</taxon>
        <taxon>Methanococcales</taxon>
        <taxon>Methanocaldococcaceae</taxon>
        <taxon>Methanocaldococcus</taxon>
    </lineage>
</organism>
<gene>
    <name type="ordered locus">MJ0957</name>
</gene>
<keyword id="KW-1185">Reference proteome</keyword>
<accession>Q58367</accession>
<feature type="chain" id="PRO_0000107121" description="Uncharacterized protein MJ0957">
    <location>
        <begin position="1"/>
        <end position="350"/>
    </location>
</feature>
<name>Y957_METJA</name>
<dbReference type="EMBL" id="L77117">
    <property type="protein sequence ID" value="AAB98970.1"/>
    <property type="molecule type" value="Genomic_DNA"/>
</dbReference>
<dbReference type="PIR" id="E64419">
    <property type="entry name" value="E64419"/>
</dbReference>
<dbReference type="RefSeq" id="WP_010870471.1">
    <property type="nucleotide sequence ID" value="NC_000909.1"/>
</dbReference>
<dbReference type="FunCoup" id="Q58367">
    <property type="interactions" value="2"/>
</dbReference>
<dbReference type="STRING" id="243232.MJ_0957"/>
<dbReference type="PaxDb" id="243232-MJ_0957"/>
<dbReference type="EnsemblBacteria" id="AAB98970">
    <property type="protein sequence ID" value="AAB98970"/>
    <property type="gene ID" value="MJ_0957"/>
</dbReference>
<dbReference type="GeneID" id="1451855"/>
<dbReference type="KEGG" id="mja:MJ_0957"/>
<dbReference type="eggNOG" id="arCOG05060">
    <property type="taxonomic scope" value="Archaea"/>
</dbReference>
<dbReference type="HOGENOM" id="CLU_803208_0_0_2"/>
<dbReference type="InParanoid" id="Q58367"/>
<dbReference type="OrthoDB" id="102284at2157"/>
<dbReference type="PhylomeDB" id="Q58367"/>
<dbReference type="Proteomes" id="UP000000805">
    <property type="component" value="Chromosome"/>
</dbReference>
<sequence length="350" mass="42001">MGDDIYIPPKPKPKPKPKPEYKYALWYFKYTNTYEKRFNGTVGDLLNRGFNYAIALEKDEGSGTPESGNLREDGEKDGKEFGEFINSELSGIKYIAQIPYYKRGMLEKLKNASKDKKQMEYYINHIYLVKRTLEYWKGWIDGVIESCDSNLVGFYWNFESPGQVSWGFITDWEIAQLSTYIKQKSNELNRKLEFIWIPYINDIENPDNNDIKRLSKYFDYVFVQPHYYIAWKYWCLWNYEKNVSEDIREYWKYQINRYNGYLTQGITKLIEVLNWIKEIPNGYIEMEVDNKIDEYKYHDLINKACDYIKAREFLTGRDIWQIRAYYFDTNIENVDKVRNGAYGIKGCKNW</sequence>
<proteinExistence type="predicted"/>